<protein>
    <recommendedName>
        <fullName evidence="1">Integration host factor subunit alpha</fullName>
        <shortName evidence="1">IHF-alpha</shortName>
    </recommendedName>
</protein>
<proteinExistence type="inferred from homology"/>
<reference key="1">
    <citation type="journal article" date="2010" name="ISME J.">
        <title>The complete genome sequence of the algal symbiont Dinoroseobacter shibae: a hitchhiker's guide to life in the sea.</title>
        <authorList>
            <person name="Wagner-Dobler I."/>
            <person name="Ballhausen B."/>
            <person name="Berger M."/>
            <person name="Brinkhoff T."/>
            <person name="Buchholz I."/>
            <person name="Bunk B."/>
            <person name="Cypionka H."/>
            <person name="Daniel R."/>
            <person name="Drepper T."/>
            <person name="Gerdts G."/>
            <person name="Hahnke S."/>
            <person name="Han C."/>
            <person name="Jahn D."/>
            <person name="Kalhoefer D."/>
            <person name="Kiss H."/>
            <person name="Klenk H.P."/>
            <person name="Kyrpides N."/>
            <person name="Liebl W."/>
            <person name="Liesegang H."/>
            <person name="Meincke L."/>
            <person name="Pati A."/>
            <person name="Petersen J."/>
            <person name="Piekarski T."/>
            <person name="Pommerenke C."/>
            <person name="Pradella S."/>
            <person name="Pukall R."/>
            <person name="Rabus R."/>
            <person name="Stackebrandt E."/>
            <person name="Thole S."/>
            <person name="Thompson L."/>
            <person name="Tielen P."/>
            <person name="Tomasch J."/>
            <person name="von Jan M."/>
            <person name="Wanphrut N."/>
            <person name="Wichels A."/>
            <person name="Zech H."/>
            <person name="Simon M."/>
        </authorList>
    </citation>
    <scope>NUCLEOTIDE SEQUENCE [LARGE SCALE GENOMIC DNA]</scope>
    <source>
        <strain>DSM 16493 / NCIMB 14021 / DFL 12</strain>
    </source>
</reference>
<gene>
    <name evidence="1" type="primary">ihfA</name>
    <name evidence="1" type="synonym">himA</name>
    <name type="ordered locus">Dshi_1721</name>
</gene>
<dbReference type="EMBL" id="CP000830">
    <property type="protein sequence ID" value="ABV93463.1"/>
    <property type="molecule type" value="Genomic_DNA"/>
</dbReference>
<dbReference type="RefSeq" id="WP_012178393.1">
    <property type="nucleotide sequence ID" value="NC_009952.1"/>
</dbReference>
<dbReference type="SMR" id="A8LLT5"/>
<dbReference type="STRING" id="398580.Dshi_1721"/>
<dbReference type="KEGG" id="dsh:Dshi_1721"/>
<dbReference type="eggNOG" id="COG0776">
    <property type="taxonomic scope" value="Bacteria"/>
</dbReference>
<dbReference type="HOGENOM" id="CLU_105066_1_1_5"/>
<dbReference type="OrthoDB" id="9797747at2"/>
<dbReference type="Proteomes" id="UP000006833">
    <property type="component" value="Chromosome"/>
</dbReference>
<dbReference type="GO" id="GO:0005829">
    <property type="term" value="C:cytosol"/>
    <property type="evidence" value="ECO:0007669"/>
    <property type="project" value="TreeGrafter"/>
</dbReference>
<dbReference type="GO" id="GO:0003677">
    <property type="term" value="F:DNA binding"/>
    <property type="evidence" value="ECO:0007669"/>
    <property type="project" value="UniProtKB-UniRule"/>
</dbReference>
<dbReference type="GO" id="GO:0030527">
    <property type="term" value="F:structural constituent of chromatin"/>
    <property type="evidence" value="ECO:0007669"/>
    <property type="project" value="InterPro"/>
</dbReference>
<dbReference type="GO" id="GO:0006310">
    <property type="term" value="P:DNA recombination"/>
    <property type="evidence" value="ECO:0007669"/>
    <property type="project" value="UniProtKB-UniRule"/>
</dbReference>
<dbReference type="GO" id="GO:0009893">
    <property type="term" value="P:positive regulation of metabolic process"/>
    <property type="evidence" value="ECO:0007669"/>
    <property type="project" value="UniProtKB-ARBA"/>
</dbReference>
<dbReference type="GO" id="GO:0006355">
    <property type="term" value="P:regulation of DNA-templated transcription"/>
    <property type="evidence" value="ECO:0007669"/>
    <property type="project" value="UniProtKB-UniRule"/>
</dbReference>
<dbReference type="GO" id="GO:0006417">
    <property type="term" value="P:regulation of translation"/>
    <property type="evidence" value="ECO:0007669"/>
    <property type="project" value="UniProtKB-UniRule"/>
</dbReference>
<dbReference type="CDD" id="cd13835">
    <property type="entry name" value="IHF_A"/>
    <property type="match status" value="1"/>
</dbReference>
<dbReference type="Gene3D" id="4.10.520.10">
    <property type="entry name" value="IHF-like DNA-binding proteins"/>
    <property type="match status" value="1"/>
</dbReference>
<dbReference type="HAMAP" id="MF_00380">
    <property type="entry name" value="IHF_alpha"/>
    <property type="match status" value="1"/>
</dbReference>
<dbReference type="InterPro" id="IPR000119">
    <property type="entry name" value="Hist_DNA-bd"/>
</dbReference>
<dbReference type="InterPro" id="IPR020816">
    <property type="entry name" value="Histone-like_DNA-bd_CS"/>
</dbReference>
<dbReference type="InterPro" id="IPR010992">
    <property type="entry name" value="IHF-like_DNA-bd_dom_sf"/>
</dbReference>
<dbReference type="InterPro" id="IPR005684">
    <property type="entry name" value="IHF_alpha"/>
</dbReference>
<dbReference type="NCBIfam" id="TIGR00987">
    <property type="entry name" value="himA"/>
    <property type="match status" value="1"/>
</dbReference>
<dbReference type="NCBIfam" id="NF001401">
    <property type="entry name" value="PRK00285.1"/>
    <property type="match status" value="1"/>
</dbReference>
<dbReference type="PANTHER" id="PTHR33175">
    <property type="entry name" value="DNA-BINDING PROTEIN HU"/>
    <property type="match status" value="1"/>
</dbReference>
<dbReference type="PANTHER" id="PTHR33175:SF2">
    <property type="entry name" value="INTEGRATION HOST FACTOR SUBUNIT ALPHA"/>
    <property type="match status" value="1"/>
</dbReference>
<dbReference type="Pfam" id="PF00216">
    <property type="entry name" value="Bac_DNA_binding"/>
    <property type="match status" value="1"/>
</dbReference>
<dbReference type="PRINTS" id="PR01727">
    <property type="entry name" value="DNABINDINGHU"/>
</dbReference>
<dbReference type="SMART" id="SM00411">
    <property type="entry name" value="BHL"/>
    <property type="match status" value="1"/>
</dbReference>
<dbReference type="SUPFAM" id="SSF47729">
    <property type="entry name" value="IHF-like DNA-binding proteins"/>
    <property type="match status" value="1"/>
</dbReference>
<dbReference type="PROSITE" id="PS00045">
    <property type="entry name" value="HISTONE_LIKE"/>
    <property type="match status" value="1"/>
</dbReference>
<comment type="function">
    <text evidence="1">This protein is one of the two subunits of integration host factor, a specific DNA-binding protein that functions in genetic recombination as well as in transcriptional and translational control.</text>
</comment>
<comment type="subunit">
    <text evidence="1">Heterodimer of an alpha and a beta chain.</text>
</comment>
<comment type="similarity">
    <text evidence="1">Belongs to the bacterial histone-like protein family.</text>
</comment>
<organism>
    <name type="scientific">Dinoroseobacter shibae (strain DSM 16493 / NCIMB 14021 / DFL 12)</name>
    <dbReference type="NCBI Taxonomy" id="398580"/>
    <lineage>
        <taxon>Bacteria</taxon>
        <taxon>Pseudomonadati</taxon>
        <taxon>Pseudomonadota</taxon>
        <taxon>Alphaproteobacteria</taxon>
        <taxon>Rhodobacterales</taxon>
        <taxon>Roseobacteraceae</taxon>
        <taxon>Dinoroseobacter</taxon>
    </lineage>
</organism>
<accession>A8LLT5</accession>
<evidence type="ECO:0000255" key="1">
    <source>
        <dbReference type="HAMAP-Rule" id="MF_00380"/>
    </source>
</evidence>
<feature type="chain" id="PRO_1000080030" description="Integration host factor subunit alpha">
    <location>
        <begin position="1"/>
        <end position="101"/>
    </location>
</feature>
<keyword id="KW-0233">DNA recombination</keyword>
<keyword id="KW-0238">DNA-binding</keyword>
<keyword id="KW-1185">Reference proteome</keyword>
<keyword id="KW-0804">Transcription</keyword>
<keyword id="KW-0805">Transcription regulation</keyword>
<keyword id="KW-0810">Translation regulation</keyword>
<name>IHFA_DINSH</name>
<sequence length="101" mass="11378">MAEKTLTRMDLSDAVFREVGLSRNESAQLVESILTHMSDALVRGESVKISSFGTFSVRDKSARIGRNPKTGEEVPIHPRRVLTFRPSHLMKERVANGNRNR</sequence>